<evidence type="ECO:0000255" key="1">
    <source>
        <dbReference type="HAMAP-Rule" id="MF_01326"/>
    </source>
</evidence>
<evidence type="ECO:0000305" key="2"/>
<keyword id="KW-0687">Ribonucleoprotein</keyword>
<keyword id="KW-0689">Ribosomal protein</keyword>
<keyword id="KW-0694">RNA-binding</keyword>
<keyword id="KW-0699">rRNA-binding</keyword>
<protein>
    <recommendedName>
        <fullName evidence="1">Large ribosomal subunit protein uL24</fullName>
    </recommendedName>
    <alternativeName>
        <fullName evidence="2">50S ribosomal protein L24</fullName>
    </alternativeName>
</protein>
<name>RL24_BUCA5</name>
<organism>
    <name type="scientific">Buchnera aphidicola subsp. Acyrthosiphon pisum (strain 5A)</name>
    <dbReference type="NCBI Taxonomy" id="563178"/>
    <lineage>
        <taxon>Bacteria</taxon>
        <taxon>Pseudomonadati</taxon>
        <taxon>Pseudomonadota</taxon>
        <taxon>Gammaproteobacteria</taxon>
        <taxon>Enterobacterales</taxon>
        <taxon>Erwiniaceae</taxon>
        <taxon>Buchnera</taxon>
    </lineage>
</organism>
<accession>B8D9T6</accession>
<sequence length="104" mass="11573">MALKLRRNDSVVILTGKDKGKTGIIKNILSLNQVIVKGLNLIKKHQKPVPSQNKSGGIIEKEAPIHISNIAILNPESNKADRIGFRFEEGRKVRFFKSTGKTIQ</sequence>
<comment type="function">
    <text evidence="1">One of two assembly initiator proteins, it binds directly to the 5'-end of the 23S rRNA, where it nucleates assembly of the 50S subunit.</text>
</comment>
<comment type="function">
    <text evidence="1">One of the proteins that surrounds the polypeptide exit tunnel on the outside of the subunit.</text>
</comment>
<comment type="subunit">
    <text evidence="1">Part of the 50S ribosomal subunit.</text>
</comment>
<comment type="similarity">
    <text evidence="1">Belongs to the universal ribosomal protein uL24 family.</text>
</comment>
<proteinExistence type="inferred from homology"/>
<dbReference type="EMBL" id="CP001161">
    <property type="protein sequence ID" value="ACL30857.1"/>
    <property type="molecule type" value="Genomic_DNA"/>
</dbReference>
<dbReference type="RefSeq" id="WP_009874464.1">
    <property type="nucleotide sequence ID" value="NC_011833.1"/>
</dbReference>
<dbReference type="SMR" id="B8D9T6"/>
<dbReference type="KEGG" id="bap:BUAP5A_506"/>
<dbReference type="HOGENOM" id="CLU_093315_2_2_6"/>
<dbReference type="OrthoDB" id="9807419at2"/>
<dbReference type="Proteomes" id="UP000006904">
    <property type="component" value="Chromosome"/>
</dbReference>
<dbReference type="GO" id="GO:1990904">
    <property type="term" value="C:ribonucleoprotein complex"/>
    <property type="evidence" value="ECO:0007669"/>
    <property type="project" value="UniProtKB-KW"/>
</dbReference>
<dbReference type="GO" id="GO:0005840">
    <property type="term" value="C:ribosome"/>
    <property type="evidence" value="ECO:0007669"/>
    <property type="project" value="UniProtKB-KW"/>
</dbReference>
<dbReference type="GO" id="GO:0019843">
    <property type="term" value="F:rRNA binding"/>
    <property type="evidence" value="ECO:0007669"/>
    <property type="project" value="UniProtKB-UniRule"/>
</dbReference>
<dbReference type="GO" id="GO:0003735">
    <property type="term" value="F:structural constituent of ribosome"/>
    <property type="evidence" value="ECO:0007669"/>
    <property type="project" value="InterPro"/>
</dbReference>
<dbReference type="GO" id="GO:0006412">
    <property type="term" value="P:translation"/>
    <property type="evidence" value="ECO:0007669"/>
    <property type="project" value="UniProtKB-UniRule"/>
</dbReference>
<dbReference type="CDD" id="cd06089">
    <property type="entry name" value="KOW_RPL26"/>
    <property type="match status" value="1"/>
</dbReference>
<dbReference type="FunFam" id="2.30.30.30:FF:000004">
    <property type="entry name" value="50S ribosomal protein L24"/>
    <property type="match status" value="1"/>
</dbReference>
<dbReference type="Gene3D" id="2.30.30.30">
    <property type="match status" value="1"/>
</dbReference>
<dbReference type="HAMAP" id="MF_01326_B">
    <property type="entry name" value="Ribosomal_uL24_B"/>
    <property type="match status" value="1"/>
</dbReference>
<dbReference type="InterPro" id="IPR005824">
    <property type="entry name" value="KOW"/>
</dbReference>
<dbReference type="InterPro" id="IPR014722">
    <property type="entry name" value="Rib_uL2_dom2"/>
</dbReference>
<dbReference type="InterPro" id="IPR003256">
    <property type="entry name" value="Ribosomal_uL24"/>
</dbReference>
<dbReference type="InterPro" id="IPR005825">
    <property type="entry name" value="Ribosomal_uL24_CS"/>
</dbReference>
<dbReference type="InterPro" id="IPR041988">
    <property type="entry name" value="Ribosomal_uL24_KOW"/>
</dbReference>
<dbReference type="InterPro" id="IPR008991">
    <property type="entry name" value="Translation_prot_SH3-like_sf"/>
</dbReference>
<dbReference type="NCBIfam" id="TIGR01079">
    <property type="entry name" value="rplX_bact"/>
    <property type="match status" value="1"/>
</dbReference>
<dbReference type="PANTHER" id="PTHR12903">
    <property type="entry name" value="MITOCHONDRIAL RIBOSOMAL PROTEIN L24"/>
    <property type="match status" value="1"/>
</dbReference>
<dbReference type="Pfam" id="PF00467">
    <property type="entry name" value="KOW"/>
    <property type="match status" value="1"/>
</dbReference>
<dbReference type="Pfam" id="PF17136">
    <property type="entry name" value="ribosomal_L24"/>
    <property type="match status" value="1"/>
</dbReference>
<dbReference type="SUPFAM" id="SSF50104">
    <property type="entry name" value="Translation proteins SH3-like domain"/>
    <property type="match status" value="1"/>
</dbReference>
<dbReference type="PROSITE" id="PS01108">
    <property type="entry name" value="RIBOSOMAL_L24"/>
    <property type="match status" value="1"/>
</dbReference>
<reference key="1">
    <citation type="journal article" date="2009" name="Science">
        <title>The dynamics and time scale of ongoing genomic erosion in symbiotic bacteria.</title>
        <authorList>
            <person name="Moran N.A."/>
            <person name="McLaughlin H.J."/>
            <person name="Sorek R."/>
        </authorList>
    </citation>
    <scope>NUCLEOTIDE SEQUENCE [LARGE SCALE GENOMIC DNA]</scope>
    <source>
        <strain>5A</strain>
    </source>
</reference>
<feature type="chain" id="PRO_1000165932" description="Large ribosomal subunit protein uL24">
    <location>
        <begin position="1"/>
        <end position="104"/>
    </location>
</feature>
<gene>
    <name evidence="1" type="primary">rplX</name>
    <name type="ordered locus">BUAP5A_506</name>
</gene>